<accession>P32033</accession>
<accession>A7M9A5</accession>
<dbReference type="EMBL" id="AM711640">
    <property type="protein sequence ID" value="CAM98433.1"/>
    <property type="molecule type" value="Genomic_DNA"/>
</dbReference>
<dbReference type="EMBL" id="X67512">
    <property type="protein sequence ID" value="CAA47848.1"/>
    <property type="molecule type" value="Genomic_DNA"/>
</dbReference>
<dbReference type="PIR" id="S33913">
    <property type="entry name" value="S33913"/>
</dbReference>
<dbReference type="RefSeq" id="YP_001430146.1">
    <property type="nucleotide sequence ID" value="NC_009766.1"/>
</dbReference>
<dbReference type="GeneID" id="5536598"/>
<dbReference type="GO" id="GO:0009532">
    <property type="term" value="C:plastid stroma"/>
    <property type="evidence" value="ECO:0007669"/>
    <property type="project" value="UniProtKB-SubCell"/>
</dbReference>
<dbReference type="GO" id="GO:0005524">
    <property type="term" value="F:ATP binding"/>
    <property type="evidence" value="ECO:0007669"/>
    <property type="project" value="UniProtKB-KW"/>
</dbReference>
<dbReference type="GO" id="GO:0016887">
    <property type="term" value="F:ATP hydrolysis activity"/>
    <property type="evidence" value="ECO:0007669"/>
    <property type="project" value="InterPro"/>
</dbReference>
<dbReference type="CDD" id="cd19505">
    <property type="entry name" value="RecA-like_Ycf2"/>
    <property type="match status" value="1"/>
</dbReference>
<dbReference type="Gene3D" id="3.40.50.300">
    <property type="entry name" value="P-loop containing nucleotide triphosphate hydrolases"/>
    <property type="match status" value="1"/>
</dbReference>
<dbReference type="HAMAP" id="MF_01330">
    <property type="entry name" value="Ycf2"/>
    <property type="match status" value="1"/>
</dbReference>
<dbReference type="InterPro" id="IPR003593">
    <property type="entry name" value="AAA+_ATPase"/>
</dbReference>
<dbReference type="InterPro" id="IPR003959">
    <property type="entry name" value="ATPase_AAA_core"/>
</dbReference>
<dbReference type="InterPro" id="IPR027417">
    <property type="entry name" value="P-loop_NTPase"/>
</dbReference>
<dbReference type="InterPro" id="IPR008543">
    <property type="entry name" value="Uncharacterised_Ycf2"/>
</dbReference>
<dbReference type="InterPro" id="IPR056777">
    <property type="entry name" value="Ycf2_N"/>
</dbReference>
<dbReference type="PANTHER" id="PTHR33078:SF100">
    <property type="entry name" value="PROTEIN YCF2"/>
    <property type="match status" value="1"/>
</dbReference>
<dbReference type="PANTHER" id="PTHR33078">
    <property type="entry name" value="PROTEIN YCF2-RELATED"/>
    <property type="match status" value="1"/>
</dbReference>
<dbReference type="Pfam" id="PF00004">
    <property type="entry name" value="AAA"/>
    <property type="match status" value="1"/>
</dbReference>
<dbReference type="Pfam" id="PF05695">
    <property type="entry name" value="Ycf2"/>
    <property type="match status" value="3"/>
</dbReference>
<dbReference type="SMART" id="SM00382">
    <property type="entry name" value="AAA"/>
    <property type="match status" value="1"/>
</dbReference>
<dbReference type="SUPFAM" id="SSF52540">
    <property type="entry name" value="P-loop containing nucleoside triphosphate hydrolases"/>
    <property type="match status" value="1"/>
</dbReference>
<name>YCF2_CUSRE</name>
<protein>
    <recommendedName>
        <fullName>Protein Ycf2</fullName>
    </recommendedName>
</protein>
<proteinExistence type="inferred from homology"/>
<evidence type="ECO:0000250" key="1"/>
<evidence type="ECO:0000255" key="2"/>
<evidence type="ECO:0000305" key="3"/>
<feature type="chain" id="PRO_0000223053" description="Protein Ycf2">
    <location>
        <begin position="1"/>
        <end position="2003"/>
    </location>
</feature>
<feature type="binding site" evidence="2">
    <location>
        <begin position="1344"/>
        <end position="1351"/>
    </location>
    <ligand>
        <name>ATP</name>
        <dbReference type="ChEBI" id="CHEBI:30616"/>
    </ligand>
</feature>
<feature type="sequence conflict" description="In Ref. 2; CAA47848." evidence="3" ref="2">
    <original>G</original>
    <variation>A</variation>
    <location>
        <position position="1806"/>
    </location>
</feature>
<organism>
    <name type="scientific">Cuscuta reflexa</name>
    <name type="common">Southern Asian dodder</name>
    <dbReference type="NCBI Taxonomy" id="4129"/>
    <lineage>
        <taxon>Eukaryota</taxon>
        <taxon>Viridiplantae</taxon>
        <taxon>Streptophyta</taxon>
        <taxon>Embryophyta</taxon>
        <taxon>Tracheophyta</taxon>
        <taxon>Spermatophyta</taxon>
        <taxon>Magnoliopsida</taxon>
        <taxon>eudicotyledons</taxon>
        <taxon>Gunneridae</taxon>
        <taxon>Pentapetalae</taxon>
        <taxon>asterids</taxon>
        <taxon>lamiids</taxon>
        <taxon>Solanales</taxon>
        <taxon>Convolvulaceae</taxon>
        <taxon>Cuscuteae</taxon>
        <taxon>Cuscuta</taxon>
        <taxon>Cuscuta subgen. Monogynella</taxon>
    </lineage>
</organism>
<gene>
    <name type="primary">ycf2</name>
</gene>
<comment type="function">
    <text>Probable ATPase of unknown function. Its presence in a non-photosynthetic plant (Epifagus virginiana) and experiments in tobacco indicate that it has an essential function which is probably not related to photosynthesis.</text>
</comment>
<comment type="subcellular location">
    <subcellularLocation>
        <location evidence="1">Plastid stroma</location>
    </subcellularLocation>
</comment>
<comment type="similarity">
    <text evidence="3">Belongs to the Ycf2 family.</text>
</comment>
<comment type="caution">
    <text evidence="3">Young tissue from this organism is photosynthetic and contains some thylakoids, although the photosynthetic activity does not exceed the light compensation point.</text>
</comment>
<geneLocation type="plastid"/>
<keyword id="KW-0067">ATP-binding</keyword>
<keyword id="KW-0547">Nucleotide-binding</keyword>
<keyword id="KW-0934">Plastid</keyword>
<sequence length="2003" mass="234542">MRHQVKVCILELREIMREIHNYYYFLDSWTKLNSVGSLIHLFFRQERFFKLFDTRIFSILLSRNLQGSPSNRYFTIKGVILFVAGVLIYRINNQNMVERKSLHLTGLFPIPMNSTEPIKDRLEEAIGSSNINRLSILLLYFPKGKNISERYFLNPKETTGVITITKKGSMPESNWNSGPSFKILVTDFIAYLTSAFREKIPKNPMINLMFPGEMEDFIGNPTRSVRPFCSDRWSELHLWTNPTEKSTIDHKFVKNPLSFVRGAENKEIMNLLRIITYLQKTFSIHSISSDPRWDSVPKHDPDMDSFQKNSLFFLFHRFHERNRFESEERLQEMTELFTLLISEPDLVYHKGFSFSIYIDSYGLEKKKLLNEARAESKNKSLWVLSPILFRYEEIEYFFQRIIQKRVRWISCGNGLADLKQKMVVFASKNIMEAVNQSRLIQNMIQIKSSTDDGYIRNLFNRFFLLKKYDRNFEYRMQGDQKGTPIFNQRTLMKCRIKQDHTYLYKWSDGTQSLQEHLEHFLSEQKSGFKVQKRYFQVMFDQLRICMTKNLIHWFEVRKKVEKKVGKNVYKLVILLLSKSLRFFFLPQSLHFFFIKLLRFVTKFILFLSNSLTIFCVSFGNTPIQRSEIYISELKCSNKKLCNQLFESIGFQIVHLKKLKPLLLEEYDTYNFVINGGTRSPFLSNKIPKRIFDSLSTRTNHSKSFDKKDSCLSKIFHDKDNWLNPPKPFHTSSLISSFYKANKLRFRSHLHHFLFYCNKRFPFSVEKARNTNSHYIYGQFLNILLFRKKRFSLCVGEKKHVFWSRATISPIESQVSNIFIPKDFIQSDDKEYNLDKYFNFLSQPDTVIRRAIYSIVETSGTPLTETQKGDLERTYCQPLSDINLYDSEVNNFPEYLNLNSNMGLAHILFSDKYLSSENHSLCLKKGADVHKGRMSTTFQRDSSFSILSEKWNLFQTYLPSFFTSTGYKYLTLIFGDNFSDLLLILSRRVSIFQEILGLSWRILQIRLSKMPLFIRSEISSQWLHNILLSKEKIRRNTKSSLISTHLRSTKFWEFFYSIIFLLLVAGYLGPIYIFFVSRAFSELQTELKSLKSLRIPSSTIELRKLLDKYPRSEPNSFWLKNIFLVVMEQLRDSLEEIKGFAFGLNRVGPTSGVNSIRFKNKYFNINGIDIIDLIPFAHTRIAFSINTRHISHTSKEIYSLIRKRKNVNGVWIDDKLESWVANSDSIHEEERKFLVQLSALTTEKRILLSLTHSDHFSKNDSGYQMIEQPGAIYLRYLVDIHQKHLMNYEFNTSCLAERRIFLAHSQTITYSQTSYGTNSFHFPSHGKPFSLRLALSPSRGILVIGSIGTGRSYLVKYLATNSYVPFITVFPNKFLDKNPQFIDDIDIDNSNNIDASDDIDMDNSDNIDDDIDRDLATELELLTWMNALTMDREMKAEIARLFITLQFELARAMSPCIIWIPNIHDLDVNESNYLSLGLLVNHLSRDCERCSPINILVIASTHIPQKVDPALIAPKKLNTCIKLRRLLIPQQRKYFFTLSYTRGFHLENKMFHTNGFGSITMGPNARDIVALTNEVLSISITQKKSIIDTNTIRSALHRQTWDLQSQVRLVQDHEILFYQIGRAVAQNVLISNLSNCPIDPISIYLKNKSCNEGDSYLYKWYFELGTSMKKLTILLYLLSCTAGSVAQDLWSLPGPDEKNGITSYGLVENDSDLVHGLLEVEGALVGSSRTEKNCSKFENDRVTLLLRPEPRNPLERMQNGSCSILDQRFLSEKYESEFEEGALAPQQIEEDLFNHIVWAPTIWRPWGFLCIERPNELGFSYWSRSFRGKRILYDEEDELEENDSEFLQSGTMQYKTRDRSSKEKGLFRISQFIWDPADPLFFLFKDRPPGSVFSRLELFADEEMSKGLLTSQTSQIEHLFRYKYTRWFINKTQEKHFEFLIHRQRCLRTNSSLSNRSFRSNTLSESYQYLSNLFLSNGTLLDQMTKTLLRKRWLFPDEMKIGFM</sequence>
<reference key="1">
    <citation type="journal article" date="2007" name="BMC Plant Biol.">
        <title>Complete DNA sequences of the plastid genomes of two parasitic flowering plant species, Cuscuta reflexa and Cuscuta gronovii.</title>
        <authorList>
            <person name="Funk H.T."/>
            <person name="Berg S."/>
            <person name="Krupinska K."/>
            <person name="Maier U.-G."/>
            <person name="Krause K."/>
        </authorList>
    </citation>
    <scope>NUCLEOTIDE SEQUENCE [LARGE SCALE GENOMIC DNA]</scope>
</reference>
<reference key="2">
    <citation type="journal article" date="1993" name="Curr. Genet.">
        <title>A large deletion in the plastid DNA of the holoparasitic flowering plant Cuscuta reflexa concerning two ribosomal proteins (rpl2, rpl23), one transfer RNA (trnI) and an ORF 2280 homologue.</title>
        <authorList>
            <person name="Boemmer D."/>
            <person name="Haberhausen G."/>
            <person name="Zetsche K."/>
        </authorList>
    </citation>
    <scope>NUCLEOTIDE SEQUENCE [GENOMIC DNA] OF 1264-2003</scope>
</reference>
<reference key="3">
    <citation type="journal article" date="1994" name="Curr. Genet.">
        <title>Structure and evolution of the largest chloroplast gene (ORF2280): internal plasticity and multiple gene loss during angiosperm evolution.</title>
        <authorList>
            <person name="Downie S.R."/>
            <person name="Katz-Downie D.S."/>
            <person name="Wolfe K.H."/>
            <person name="Calie P.J."/>
            <person name="Palmer J.D."/>
        </authorList>
    </citation>
    <scope>DISCUSSION OF SEQUENCE</scope>
</reference>